<organism>
    <name type="scientific">Thermococcus kodakarensis (strain ATCC BAA-918 / JCM 12380 / KOD1)</name>
    <name type="common">Pyrococcus kodakaraensis (strain KOD1)</name>
    <dbReference type="NCBI Taxonomy" id="69014"/>
    <lineage>
        <taxon>Archaea</taxon>
        <taxon>Methanobacteriati</taxon>
        <taxon>Methanobacteriota</taxon>
        <taxon>Thermococci</taxon>
        <taxon>Thermococcales</taxon>
        <taxon>Thermococcaceae</taxon>
        <taxon>Thermococcus</taxon>
    </lineage>
</organism>
<comment type="subunit">
    <text evidence="2">Part of the 30S ribosomal subunit.</text>
</comment>
<comment type="similarity">
    <text evidence="1">Belongs to the eukaryotic ribosomal protein eS24 family.</text>
</comment>
<protein>
    <recommendedName>
        <fullName evidence="1">Small ribosomal subunit protein eS24</fullName>
    </recommendedName>
    <alternativeName>
        <fullName evidence="3">30S ribosomal protein S24e</fullName>
    </alternativeName>
</protein>
<keyword id="KW-0002">3D-structure</keyword>
<keyword id="KW-1185">Reference proteome</keyword>
<keyword id="KW-0687">Ribonucleoprotein</keyword>
<keyword id="KW-0689">Ribosomal protein</keyword>
<reference key="1">
    <citation type="journal article" date="2005" name="Genome Res.">
        <title>Complete genome sequence of the hyperthermophilic archaeon Thermococcus kodakaraensis KOD1 and comparison with Pyrococcus genomes.</title>
        <authorList>
            <person name="Fukui T."/>
            <person name="Atomi H."/>
            <person name="Kanai T."/>
            <person name="Matsumi R."/>
            <person name="Fujiwara S."/>
            <person name="Imanaka T."/>
        </authorList>
    </citation>
    <scope>NUCLEOTIDE SEQUENCE [LARGE SCALE GENOMIC DNA]</scope>
    <source>
        <strain>ATCC BAA-918 / JCM 12380 / KOD1</strain>
    </source>
</reference>
<reference evidence="4 5 6" key="2">
    <citation type="journal article" date="2020" name="Nature">
        <title>Dynamic RNA acetylation revealed by quantitative cross-evolutionary mapping.</title>
        <authorList>
            <person name="Sas-Chen A."/>
            <person name="Thomas J.M."/>
            <person name="Matzov D."/>
            <person name="Taoka M."/>
            <person name="Nance K.D."/>
            <person name="Nir R."/>
            <person name="Bryson K.M."/>
            <person name="Shachar R."/>
            <person name="Liman G.L.S."/>
            <person name="Burkhart B.W."/>
            <person name="Gamage S.T."/>
            <person name="Nobe Y."/>
            <person name="Briney C.A."/>
            <person name="Levy M.J."/>
            <person name="Fuchs R.T."/>
            <person name="Robb G.B."/>
            <person name="Hartmann J."/>
            <person name="Sharma S."/>
            <person name="Lin Q."/>
            <person name="Florens L."/>
            <person name="Washburn M.P."/>
            <person name="Isobe T."/>
            <person name="Santangelo T.J."/>
            <person name="Shalev-Benami M."/>
            <person name="Meier J.L."/>
            <person name="Schwartz S."/>
        </authorList>
    </citation>
    <scope>STRUCTURE BY ELECTRON MICROSCOPY (2.55 ANGSTROMS) IN 70S RIBOSOME</scope>
    <scope>SUBUNIT</scope>
    <source>
        <strain>ATCC BAA-918 / TS559</strain>
    </source>
</reference>
<name>RS24_THEKO</name>
<evidence type="ECO:0000255" key="1">
    <source>
        <dbReference type="HAMAP-Rule" id="MF_00545"/>
    </source>
</evidence>
<evidence type="ECO:0000269" key="2">
    <source>
    </source>
</evidence>
<evidence type="ECO:0000305" key="3"/>
<evidence type="ECO:0007744" key="4">
    <source>
        <dbReference type="PDB" id="6SKF"/>
    </source>
</evidence>
<evidence type="ECO:0007744" key="5">
    <source>
        <dbReference type="PDB" id="6SKG"/>
    </source>
</evidence>
<evidence type="ECO:0007744" key="6">
    <source>
        <dbReference type="PDB" id="6TH6"/>
    </source>
</evidence>
<evidence type="ECO:0007829" key="7">
    <source>
        <dbReference type="PDB" id="8A8S"/>
    </source>
</evidence>
<gene>
    <name evidence="1" type="primary">rps24e</name>
    <name type="ordered locus">TK1696</name>
</gene>
<sequence>MEIKVTEIRENKLLGRKEIYFDVLHEGEPTPSREAVKGKLVAMLDLDPNTTVIQYIRSYFGSNVSKGYAKAYETRERMLYIEPEYILVRDGLVQKQEE</sequence>
<proteinExistence type="evidence at protein level"/>
<dbReference type="EMBL" id="AP006878">
    <property type="protein sequence ID" value="BAD85885.1"/>
    <property type="molecule type" value="Genomic_DNA"/>
</dbReference>
<dbReference type="RefSeq" id="WP_011250647.1">
    <property type="nucleotide sequence ID" value="NC_006624.1"/>
</dbReference>
<dbReference type="PDB" id="6SKF">
    <property type="method" value="EM"/>
    <property type="resolution" value="2.95 A"/>
    <property type="chains" value="Aw=1-98"/>
</dbReference>
<dbReference type="PDB" id="6SKG">
    <property type="method" value="EM"/>
    <property type="resolution" value="2.65 A"/>
    <property type="chains" value="Aw/Bn=1-98"/>
</dbReference>
<dbReference type="PDB" id="6TH6">
    <property type="method" value="EM"/>
    <property type="resolution" value="2.55 A"/>
    <property type="chains" value="Aw=1-98"/>
</dbReference>
<dbReference type="PDB" id="8A8S">
    <property type="method" value="X-ray"/>
    <property type="resolution" value="1.66 A"/>
    <property type="chains" value="A=1-96"/>
</dbReference>
<dbReference type="PDBsum" id="6SKF"/>
<dbReference type="PDBsum" id="6SKG"/>
<dbReference type="PDBsum" id="6TH6"/>
<dbReference type="PDBsum" id="8A8S"/>
<dbReference type="EMDB" id="EMD-10223"/>
<dbReference type="EMDB" id="EMD-10224"/>
<dbReference type="EMDB" id="EMD-10503"/>
<dbReference type="SMR" id="Q5JIY8"/>
<dbReference type="FunCoup" id="Q5JIY8">
    <property type="interactions" value="60"/>
</dbReference>
<dbReference type="STRING" id="69014.TK1696"/>
<dbReference type="EnsemblBacteria" id="BAD85885">
    <property type="protein sequence ID" value="BAD85885"/>
    <property type="gene ID" value="TK1696"/>
</dbReference>
<dbReference type="GeneID" id="78448225"/>
<dbReference type="KEGG" id="tko:TK1696"/>
<dbReference type="PATRIC" id="fig|69014.16.peg.1654"/>
<dbReference type="eggNOG" id="arCOG04182">
    <property type="taxonomic scope" value="Archaea"/>
</dbReference>
<dbReference type="HOGENOM" id="CLU_107248_3_2_2"/>
<dbReference type="InParanoid" id="Q5JIY8"/>
<dbReference type="OrthoDB" id="27533at2157"/>
<dbReference type="PhylomeDB" id="Q5JIY8"/>
<dbReference type="Proteomes" id="UP000000536">
    <property type="component" value="Chromosome"/>
</dbReference>
<dbReference type="GO" id="GO:1990904">
    <property type="term" value="C:ribonucleoprotein complex"/>
    <property type="evidence" value="ECO:0007669"/>
    <property type="project" value="UniProtKB-KW"/>
</dbReference>
<dbReference type="GO" id="GO:0005840">
    <property type="term" value="C:ribosome"/>
    <property type="evidence" value="ECO:0007669"/>
    <property type="project" value="UniProtKB-KW"/>
</dbReference>
<dbReference type="GO" id="GO:0003735">
    <property type="term" value="F:structural constituent of ribosome"/>
    <property type="evidence" value="ECO:0007669"/>
    <property type="project" value="InterPro"/>
</dbReference>
<dbReference type="GO" id="GO:0006412">
    <property type="term" value="P:translation"/>
    <property type="evidence" value="ECO:0007669"/>
    <property type="project" value="UniProtKB-UniRule"/>
</dbReference>
<dbReference type="Gene3D" id="3.30.70.330">
    <property type="match status" value="1"/>
</dbReference>
<dbReference type="HAMAP" id="MF_00545">
    <property type="entry name" value="Ribosomal_eS24"/>
    <property type="match status" value="1"/>
</dbReference>
<dbReference type="InterPro" id="IPR012677">
    <property type="entry name" value="Nucleotide-bd_a/b_plait_sf"/>
</dbReference>
<dbReference type="InterPro" id="IPR001976">
    <property type="entry name" value="Ribosomal_eS24"/>
</dbReference>
<dbReference type="InterPro" id="IPR018098">
    <property type="entry name" value="Ribosomal_eS24_CS"/>
</dbReference>
<dbReference type="InterPro" id="IPR012678">
    <property type="entry name" value="Ribosomal_uL23/eL15/eS24_sf"/>
</dbReference>
<dbReference type="PANTHER" id="PTHR10496">
    <property type="entry name" value="40S RIBOSOMAL PROTEIN S24"/>
    <property type="match status" value="1"/>
</dbReference>
<dbReference type="Pfam" id="PF01282">
    <property type="entry name" value="Ribosomal_S24e"/>
    <property type="match status" value="1"/>
</dbReference>
<dbReference type="SUPFAM" id="SSF54189">
    <property type="entry name" value="Ribosomal proteins S24e, L23 and L15e"/>
    <property type="match status" value="1"/>
</dbReference>
<dbReference type="PROSITE" id="PS00529">
    <property type="entry name" value="RIBOSOMAL_S24E"/>
    <property type="match status" value="1"/>
</dbReference>
<feature type="chain" id="PRO_0000137654" description="Small ribosomal subunit protein eS24">
    <location>
        <begin position="1"/>
        <end position="98"/>
    </location>
</feature>
<feature type="strand" evidence="7">
    <location>
        <begin position="2"/>
        <end position="11"/>
    </location>
</feature>
<feature type="turn" evidence="7">
    <location>
        <begin position="12"/>
        <end position="15"/>
    </location>
</feature>
<feature type="strand" evidence="7">
    <location>
        <begin position="16"/>
        <end position="24"/>
    </location>
</feature>
<feature type="helix" evidence="7">
    <location>
        <begin position="33"/>
        <end position="44"/>
    </location>
</feature>
<feature type="helix" evidence="7">
    <location>
        <begin position="48"/>
        <end position="50"/>
    </location>
</feature>
<feature type="strand" evidence="7">
    <location>
        <begin position="51"/>
        <end position="57"/>
    </location>
</feature>
<feature type="strand" evidence="7">
    <location>
        <begin position="63"/>
        <end position="74"/>
    </location>
</feature>
<feature type="helix" evidence="7">
    <location>
        <begin position="75"/>
        <end position="81"/>
    </location>
</feature>
<feature type="helix" evidence="7">
    <location>
        <begin position="84"/>
        <end position="89"/>
    </location>
</feature>
<accession>Q5JIY8</accession>